<name>PURA_THEPX</name>
<organism>
    <name type="scientific">Thermoanaerobacter sp. (strain X514)</name>
    <dbReference type="NCBI Taxonomy" id="399726"/>
    <lineage>
        <taxon>Bacteria</taxon>
        <taxon>Bacillati</taxon>
        <taxon>Bacillota</taxon>
        <taxon>Clostridia</taxon>
        <taxon>Thermoanaerobacterales</taxon>
        <taxon>Thermoanaerobacteraceae</taxon>
        <taxon>Thermoanaerobacter</taxon>
    </lineage>
</organism>
<reference key="1">
    <citation type="submission" date="2008-01" db="EMBL/GenBank/DDBJ databases">
        <title>Complete sequence of Thermoanaerobacter sp. X514.</title>
        <authorList>
            <consortium name="US DOE Joint Genome Institute"/>
            <person name="Copeland A."/>
            <person name="Lucas S."/>
            <person name="Lapidus A."/>
            <person name="Barry K."/>
            <person name="Glavina del Rio T."/>
            <person name="Dalin E."/>
            <person name="Tice H."/>
            <person name="Pitluck S."/>
            <person name="Bruce D."/>
            <person name="Goodwin L."/>
            <person name="Saunders E."/>
            <person name="Brettin T."/>
            <person name="Detter J.C."/>
            <person name="Han C."/>
            <person name="Schmutz J."/>
            <person name="Larimer F."/>
            <person name="Land M."/>
            <person name="Hauser L."/>
            <person name="Kyrpides N."/>
            <person name="Kim E."/>
            <person name="Hemme C."/>
            <person name="Fields M.W."/>
            <person name="He Z."/>
            <person name="Zhou J."/>
            <person name="Richardson P."/>
        </authorList>
    </citation>
    <scope>NUCLEOTIDE SEQUENCE [LARGE SCALE GENOMIC DNA]</scope>
    <source>
        <strain>X514</strain>
    </source>
</reference>
<protein>
    <recommendedName>
        <fullName evidence="1">Adenylosuccinate synthetase</fullName>
        <shortName evidence="1">AMPSase</shortName>
        <shortName evidence="1">AdSS</shortName>
        <ecNumber evidence="1">6.3.4.4</ecNumber>
    </recommendedName>
    <alternativeName>
        <fullName evidence="1">IMP--aspartate ligase</fullName>
    </alternativeName>
</protein>
<dbReference type="EC" id="6.3.4.4" evidence="1"/>
<dbReference type="EMBL" id="CP000923">
    <property type="protein sequence ID" value="ABY93614.1"/>
    <property type="molecule type" value="Genomic_DNA"/>
</dbReference>
<dbReference type="RefSeq" id="WP_009052093.1">
    <property type="nucleotide sequence ID" value="NC_010320.1"/>
</dbReference>
<dbReference type="SMR" id="B0K5I0"/>
<dbReference type="KEGG" id="tex:Teth514_2354"/>
<dbReference type="HOGENOM" id="CLU_029848_0_0_9"/>
<dbReference type="UniPathway" id="UPA00075">
    <property type="reaction ID" value="UER00335"/>
</dbReference>
<dbReference type="Proteomes" id="UP000002155">
    <property type="component" value="Chromosome"/>
</dbReference>
<dbReference type="GO" id="GO:0005737">
    <property type="term" value="C:cytoplasm"/>
    <property type="evidence" value="ECO:0007669"/>
    <property type="project" value="UniProtKB-SubCell"/>
</dbReference>
<dbReference type="GO" id="GO:0004019">
    <property type="term" value="F:adenylosuccinate synthase activity"/>
    <property type="evidence" value="ECO:0007669"/>
    <property type="project" value="UniProtKB-UniRule"/>
</dbReference>
<dbReference type="GO" id="GO:0005525">
    <property type="term" value="F:GTP binding"/>
    <property type="evidence" value="ECO:0007669"/>
    <property type="project" value="UniProtKB-UniRule"/>
</dbReference>
<dbReference type="GO" id="GO:0000287">
    <property type="term" value="F:magnesium ion binding"/>
    <property type="evidence" value="ECO:0007669"/>
    <property type="project" value="UniProtKB-UniRule"/>
</dbReference>
<dbReference type="GO" id="GO:0044208">
    <property type="term" value="P:'de novo' AMP biosynthetic process"/>
    <property type="evidence" value="ECO:0007669"/>
    <property type="project" value="UniProtKB-UniRule"/>
</dbReference>
<dbReference type="GO" id="GO:0046040">
    <property type="term" value="P:IMP metabolic process"/>
    <property type="evidence" value="ECO:0007669"/>
    <property type="project" value="TreeGrafter"/>
</dbReference>
<dbReference type="CDD" id="cd03108">
    <property type="entry name" value="AdSS"/>
    <property type="match status" value="1"/>
</dbReference>
<dbReference type="FunFam" id="1.10.300.10:FF:000001">
    <property type="entry name" value="Adenylosuccinate synthetase"/>
    <property type="match status" value="1"/>
</dbReference>
<dbReference type="FunFam" id="3.90.170.10:FF:000001">
    <property type="entry name" value="Adenylosuccinate synthetase"/>
    <property type="match status" value="1"/>
</dbReference>
<dbReference type="Gene3D" id="3.40.440.10">
    <property type="entry name" value="Adenylosuccinate Synthetase, subunit A, domain 1"/>
    <property type="match status" value="1"/>
</dbReference>
<dbReference type="Gene3D" id="1.10.300.10">
    <property type="entry name" value="Adenylosuccinate Synthetase, subunit A, domain 2"/>
    <property type="match status" value="1"/>
</dbReference>
<dbReference type="Gene3D" id="3.90.170.10">
    <property type="entry name" value="Adenylosuccinate Synthetase, subunit A, domain 3"/>
    <property type="match status" value="1"/>
</dbReference>
<dbReference type="HAMAP" id="MF_00011">
    <property type="entry name" value="Adenylosucc_synth"/>
    <property type="match status" value="1"/>
</dbReference>
<dbReference type="InterPro" id="IPR018220">
    <property type="entry name" value="Adenylosuccin_syn_GTP-bd"/>
</dbReference>
<dbReference type="InterPro" id="IPR033128">
    <property type="entry name" value="Adenylosuccin_syn_Lys_AS"/>
</dbReference>
<dbReference type="InterPro" id="IPR042109">
    <property type="entry name" value="Adenylosuccinate_synth_dom1"/>
</dbReference>
<dbReference type="InterPro" id="IPR042110">
    <property type="entry name" value="Adenylosuccinate_synth_dom2"/>
</dbReference>
<dbReference type="InterPro" id="IPR042111">
    <property type="entry name" value="Adenylosuccinate_synth_dom3"/>
</dbReference>
<dbReference type="InterPro" id="IPR001114">
    <property type="entry name" value="Adenylosuccinate_synthetase"/>
</dbReference>
<dbReference type="InterPro" id="IPR027417">
    <property type="entry name" value="P-loop_NTPase"/>
</dbReference>
<dbReference type="NCBIfam" id="NF002223">
    <property type="entry name" value="PRK01117.1"/>
    <property type="match status" value="1"/>
</dbReference>
<dbReference type="NCBIfam" id="NF010355">
    <property type="entry name" value="PRK13783.1"/>
    <property type="match status" value="1"/>
</dbReference>
<dbReference type="NCBIfam" id="TIGR00184">
    <property type="entry name" value="purA"/>
    <property type="match status" value="1"/>
</dbReference>
<dbReference type="PANTHER" id="PTHR11846">
    <property type="entry name" value="ADENYLOSUCCINATE SYNTHETASE"/>
    <property type="match status" value="1"/>
</dbReference>
<dbReference type="PANTHER" id="PTHR11846:SF0">
    <property type="entry name" value="ADENYLOSUCCINATE SYNTHETASE"/>
    <property type="match status" value="1"/>
</dbReference>
<dbReference type="Pfam" id="PF00709">
    <property type="entry name" value="Adenylsucc_synt"/>
    <property type="match status" value="1"/>
</dbReference>
<dbReference type="SMART" id="SM00788">
    <property type="entry name" value="Adenylsucc_synt"/>
    <property type="match status" value="1"/>
</dbReference>
<dbReference type="SUPFAM" id="SSF52540">
    <property type="entry name" value="P-loop containing nucleoside triphosphate hydrolases"/>
    <property type="match status" value="1"/>
</dbReference>
<dbReference type="PROSITE" id="PS01266">
    <property type="entry name" value="ADENYLOSUCCIN_SYN_1"/>
    <property type="match status" value="1"/>
</dbReference>
<dbReference type="PROSITE" id="PS00513">
    <property type="entry name" value="ADENYLOSUCCIN_SYN_2"/>
    <property type="match status" value="1"/>
</dbReference>
<keyword id="KW-0963">Cytoplasm</keyword>
<keyword id="KW-0342">GTP-binding</keyword>
<keyword id="KW-0436">Ligase</keyword>
<keyword id="KW-0460">Magnesium</keyword>
<keyword id="KW-0479">Metal-binding</keyword>
<keyword id="KW-0547">Nucleotide-binding</keyword>
<keyword id="KW-0658">Purine biosynthesis</keyword>
<gene>
    <name evidence="1" type="primary">purA</name>
    <name type="ordered locus">Teth514_2354</name>
</gene>
<feature type="chain" id="PRO_1000089348" description="Adenylosuccinate synthetase">
    <location>
        <begin position="1"/>
        <end position="426"/>
    </location>
</feature>
<feature type="active site" description="Proton acceptor" evidence="1">
    <location>
        <position position="13"/>
    </location>
</feature>
<feature type="active site" description="Proton donor" evidence="1">
    <location>
        <position position="41"/>
    </location>
</feature>
<feature type="binding site" evidence="1">
    <location>
        <begin position="12"/>
        <end position="18"/>
    </location>
    <ligand>
        <name>GTP</name>
        <dbReference type="ChEBI" id="CHEBI:37565"/>
    </ligand>
</feature>
<feature type="binding site" description="in other chain" evidence="1">
    <location>
        <begin position="13"/>
        <end position="16"/>
    </location>
    <ligand>
        <name>IMP</name>
        <dbReference type="ChEBI" id="CHEBI:58053"/>
        <note>ligand shared between dimeric partners</note>
    </ligand>
</feature>
<feature type="binding site" evidence="1">
    <location>
        <position position="13"/>
    </location>
    <ligand>
        <name>Mg(2+)</name>
        <dbReference type="ChEBI" id="CHEBI:18420"/>
    </ligand>
</feature>
<feature type="binding site" description="in other chain" evidence="1">
    <location>
        <begin position="38"/>
        <end position="41"/>
    </location>
    <ligand>
        <name>IMP</name>
        <dbReference type="ChEBI" id="CHEBI:58053"/>
        <note>ligand shared between dimeric partners</note>
    </ligand>
</feature>
<feature type="binding site" evidence="1">
    <location>
        <begin position="40"/>
        <end position="42"/>
    </location>
    <ligand>
        <name>GTP</name>
        <dbReference type="ChEBI" id="CHEBI:37565"/>
    </ligand>
</feature>
<feature type="binding site" evidence="1">
    <location>
        <position position="40"/>
    </location>
    <ligand>
        <name>Mg(2+)</name>
        <dbReference type="ChEBI" id="CHEBI:18420"/>
    </ligand>
</feature>
<feature type="binding site" description="in other chain" evidence="1">
    <location>
        <position position="128"/>
    </location>
    <ligand>
        <name>IMP</name>
        <dbReference type="ChEBI" id="CHEBI:58053"/>
        <note>ligand shared between dimeric partners</note>
    </ligand>
</feature>
<feature type="binding site" evidence="1">
    <location>
        <position position="142"/>
    </location>
    <ligand>
        <name>IMP</name>
        <dbReference type="ChEBI" id="CHEBI:58053"/>
        <note>ligand shared between dimeric partners</note>
    </ligand>
</feature>
<feature type="binding site" description="in other chain" evidence="1">
    <location>
        <position position="223"/>
    </location>
    <ligand>
        <name>IMP</name>
        <dbReference type="ChEBI" id="CHEBI:58053"/>
        <note>ligand shared between dimeric partners</note>
    </ligand>
</feature>
<feature type="binding site" description="in other chain" evidence="1">
    <location>
        <position position="238"/>
    </location>
    <ligand>
        <name>IMP</name>
        <dbReference type="ChEBI" id="CHEBI:58053"/>
        <note>ligand shared between dimeric partners</note>
    </ligand>
</feature>
<feature type="binding site" evidence="1">
    <location>
        <begin position="298"/>
        <end position="304"/>
    </location>
    <ligand>
        <name>substrate</name>
    </ligand>
</feature>
<feature type="binding site" description="in other chain" evidence="1">
    <location>
        <position position="302"/>
    </location>
    <ligand>
        <name>IMP</name>
        <dbReference type="ChEBI" id="CHEBI:58053"/>
        <note>ligand shared between dimeric partners</note>
    </ligand>
</feature>
<feature type="binding site" evidence="1">
    <location>
        <position position="304"/>
    </location>
    <ligand>
        <name>GTP</name>
        <dbReference type="ChEBI" id="CHEBI:37565"/>
    </ligand>
</feature>
<feature type="binding site" evidence="1">
    <location>
        <begin position="330"/>
        <end position="332"/>
    </location>
    <ligand>
        <name>GTP</name>
        <dbReference type="ChEBI" id="CHEBI:37565"/>
    </ligand>
</feature>
<feature type="binding site" evidence="1">
    <location>
        <begin position="412"/>
        <end position="414"/>
    </location>
    <ligand>
        <name>GTP</name>
        <dbReference type="ChEBI" id="CHEBI:37565"/>
    </ligand>
</feature>
<accession>B0K5I0</accession>
<proteinExistence type="inferred from homology"/>
<comment type="function">
    <text evidence="1">Plays an important role in the de novo pathway of purine nucleotide biosynthesis. Catalyzes the first committed step in the biosynthesis of AMP from IMP.</text>
</comment>
<comment type="catalytic activity">
    <reaction evidence="1">
        <text>IMP + L-aspartate + GTP = N(6)-(1,2-dicarboxyethyl)-AMP + GDP + phosphate + 2 H(+)</text>
        <dbReference type="Rhea" id="RHEA:15753"/>
        <dbReference type="ChEBI" id="CHEBI:15378"/>
        <dbReference type="ChEBI" id="CHEBI:29991"/>
        <dbReference type="ChEBI" id="CHEBI:37565"/>
        <dbReference type="ChEBI" id="CHEBI:43474"/>
        <dbReference type="ChEBI" id="CHEBI:57567"/>
        <dbReference type="ChEBI" id="CHEBI:58053"/>
        <dbReference type="ChEBI" id="CHEBI:58189"/>
        <dbReference type="EC" id="6.3.4.4"/>
    </reaction>
</comment>
<comment type="cofactor">
    <cofactor evidence="1">
        <name>Mg(2+)</name>
        <dbReference type="ChEBI" id="CHEBI:18420"/>
    </cofactor>
    <text evidence="1">Binds 1 Mg(2+) ion per subunit.</text>
</comment>
<comment type="pathway">
    <text evidence="1">Purine metabolism; AMP biosynthesis via de novo pathway; AMP from IMP: step 1/2.</text>
</comment>
<comment type="subunit">
    <text evidence="1">Homodimer.</text>
</comment>
<comment type="subcellular location">
    <subcellularLocation>
        <location evidence="1">Cytoplasm</location>
    </subcellularLocation>
</comment>
<comment type="similarity">
    <text evidence="1">Belongs to the adenylosuccinate synthetase family.</text>
</comment>
<evidence type="ECO:0000255" key="1">
    <source>
        <dbReference type="HAMAP-Rule" id="MF_00011"/>
    </source>
</evidence>
<sequence>MSTLVIVGTQWGDEGKGKITDYLAEKADVVVRYQGGNNAGHTVEKEGVQYKLHLIPSGILYSEKICIIGNGVVVDPASLIEEIENLQKQGISVDNLKISDRAHIVFPYHIKQDELEEISKGKNDLGTTKRGIGPCYMDKSERIGIRVCDLLKPKVFEEKLRRNVEKKNKLFKELYGAEGFDFEEMYQKYLEYAEKIKPFVTDTTVLLYDLIKSGKKVLFEGAQGTLLDLDLGTYPYVTASHPIAGGVTVGAGIGPTMIDEVMGVVKAYTTRVGKGPFPTELFDENGEFLREKGHEYGTTTGRARRCGWLDAVILKYSVRVSGITHFALTKLDTLTGLKKIKICTGYKFNGRIITDFPASLEDLAQCEPVYEEFDGWEEDIQGAKTFDDLPYNAQKYIRRIEELIGIKAAIISVGPERNQTIVLRDF</sequence>